<proteinExistence type="inferred from homology"/>
<sequence length="355" mass="39922">MADKSHVNNVPMQGNGAYSSHAALQHEAMLKALPLFRAAAEAISKVDSTRVAIVEYGSAHGNNSLEPMEAILKSIHARSLELLFSDRPENDFCTLSKTVTEWADGLVENQLLHPLFISMIPRSFYQQVIPPKSAHLGFSLAALHHLDHVPQPTEDGQDESKLLQRQAHVDLATFLKLRSKEIVSGGSLILSFVGQASAGYENYGGPVDACRNAMIQMVQQDKIPVSVAQAFRVPTYNRTLSDVKKLMDEFTQIWKVHDLFEDDVMHPAFYELKIQSNPSQEASHKYAEIVIDWMMAVCSGYFTKALQVGSQGGYTKEEEESLLQDWVTRTKELFIRDHKDEEVICSFIYIRLERL</sequence>
<name>FUS9_GIBM7</name>
<dbReference type="EC" id="2.1.1.-" evidence="3"/>
<dbReference type="EMBL" id="CM000586">
    <property type="protein sequence ID" value="EWG52297.1"/>
    <property type="molecule type" value="Genomic_DNA"/>
</dbReference>
<dbReference type="RefSeq" id="XP_018758488.1">
    <property type="nucleotide sequence ID" value="XM_018900238.1"/>
</dbReference>
<dbReference type="SMR" id="W7N6M8"/>
<dbReference type="EnsemblFungi" id="FVEG_11078T0">
    <property type="protein sequence ID" value="FVEG_11078T0"/>
    <property type="gene ID" value="FVEG_11078"/>
</dbReference>
<dbReference type="GeneID" id="30068614"/>
<dbReference type="KEGG" id="fvr:FVEG_11078"/>
<dbReference type="VEuPathDB" id="FungiDB:FVEG_11078"/>
<dbReference type="eggNOG" id="ENOG502QQYU">
    <property type="taxonomic scope" value="Eukaryota"/>
</dbReference>
<dbReference type="HOGENOM" id="CLU_058489_0_0_1"/>
<dbReference type="OMA" id="RPYHAAG"/>
<dbReference type="OrthoDB" id="25310at110618"/>
<dbReference type="Proteomes" id="UP000009096">
    <property type="component" value="Chromosome 9"/>
</dbReference>
<dbReference type="GO" id="GO:0046872">
    <property type="term" value="F:metal ion binding"/>
    <property type="evidence" value="ECO:0007669"/>
    <property type="project" value="UniProtKB-KW"/>
</dbReference>
<dbReference type="GO" id="GO:0008168">
    <property type="term" value="F:methyltransferase activity"/>
    <property type="evidence" value="ECO:0007669"/>
    <property type="project" value="UniProtKB-KW"/>
</dbReference>
<dbReference type="GO" id="GO:0032259">
    <property type="term" value="P:methylation"/>
    <property type="evidence" value="ECO:0007669"/>
    <property type="project" value="UniProtKB-KW"/>
</dbReference>
<dbReference type="Gene3D" id="1.10.1200.270">
    <property type="entry name" value="Methyltransferase, alpha-helical capping domain"/>
    <property type="match status" value="1"/>
</dbReference>
<dbReference type="Gene3D" id="3.40.50.150">
    <property type="entry name" value="Vaccinia Virus protein VP39"/>
    <property type="match status" value="1"/>
</dbReference>
<dbReference type="InterPro" id="IPR005299">
    <property type="entry name" value="MeTrfase_7"/>
</dbReference>
<dbReference type="InterPro" id="IPR042086">
    <property type="entry name" value="MeTrfase_capping"/>
</dbReference>
<dbReference type="InterPro" id="IPR029063">
    <property type="entry name" value="SAM-dependent_MTases_sf"/>
</dbReference>
<dbReference type="PANTHER" id="PTHR31009">
    <property type="entry name" value="S-ADENOSYL-L-METHIONINE:CARBOXYL METHYLTRANSFERASE FAMILY PROTEIN"/>
    <property type="match status" value="1"/>
</dbReference>
<dbReference type="Pfam" id="PF03492">
    <property type="entry name" value="Methyltransf_7"/>
    <property type="match status" value="1"/>
</dbReference>
<dbReference type="SUPFAM" id="SSF53335">
    <property type="entry name" value="S-adenosyl-L-methionine-dependent methyltransferases"/>
    <property type="match status" value="1"/>
</dbReference>
<evidence type="ECO:0000250" key="1">
    <source>
        <dbReference type="UniProtKB" id="A0A6C0WW36"/>
    </source>
</evidence>
<evidence type="ECO:0000250" key="2">
    <source>
        <dbReference type="UniProtKB" id="Q9FLN8"/>
    </source>
</evidence>
<evidence type="ECO:0000250" key="3">
    <source>
        <dbReference type="UniProtKB" id="S0EHD6"/>
    </source>
</evidence>
<evidence type="ECO:0000269" key="4">
    <source>
    </source>
</evidence>
<evidence type="ECO:0000269" key="5">
    <source>
    </source>
</evidence>
<evidence type="ECO:0000303" key="6">
    <source>
    </source>
</evidence>
<evidence type="ECO:0000305" key="7"/>
<evidence type="ECO:0000305" key="8">
    <source>
    </source>
</evidence>
<keyword id="KW-0460">Magnesium</keyword>
<keyword id="KW-0479">Metal-binding</keyword>
<keyword id="KW-0489">Methyltransferase</keyword>
<keyword id="KW-1185">Reference proteome</keyword>
<keyword id="KW-0949">S-adenosyl-L-methionine</keyword>
<keyword id="KW-0808">Transferase</keyword>
<gene>
    <name evidence="6" type="primary">FUS9</name>
    <name type="ORF">FVEG_11078</name>
</gene>
<protein>
    <recommendedName>
        <fullName evidence="6">Methyltransferase FUS9</fullName>
        <ecNumber evidence="3">2.1.1.-</ecNumber>
    </recommendedName>
    <alternativeName>
        <fullName evidence="6">Fusarin biosynthesis protein 9</fullName>
    </alternativeName>
</protein>
<feature type="chain" id="PRO_0000437362" description="Methyltransferase FUS9">
    <location>
        <begin position="1"/>
        <end position="355"/>
    </location>
</feature>
<feature type="binding site" evidence="1">
    <location>
        <position position="18"/>
    </location>
    <ligand>
        <name>S-adenosyl-L-homocysteine</name>
        <dbReference type="ChEBI" id="CHEBI:57856"/>
    </ligand>
</feature>
<feature type="binding site" evidence="1">
    <location>
        <position position="63"/>
    </location>
    <ligand>
        <name>S-adenosyl-L-homocysteine</name>
        <dbReference type="ChEBI" id="CHEBI:57856"/>
    </ligand>
</feature>
<feature type="binding site" evidence="1">
    <location>
        <position position="86"/>
    </location>
    <ligand>
        <name>S-adenosyl-L-homocysteine</name>
        <dbReference type="ChEBI" id="CHEBI:57856"/>
    </ligand>
</feature>
<feature type="binding site" evidence="1">
    <location>
        <position position="123"/>
    </location>
    <ligand>
        <name>S-adenosyl-L-homocysteine</name>
        <dbReference type="ChEBI" id="CHEBI:57856"/>
    </ligand>
</feature>
<feature type="binding site" evidence="1">
    <location>
        <position position="124"/>
    </location>
    <ligand>
        <name>S-adenosyl-L-homocysteine</name>
        <dbReference type="ChEBI" id="CHEBI:57856"/>
    </ligand>
</feature>
<feature type="binding site" evidence="2">
    <location>
        <position position="231"/>
    </location>
    <ligand>
        <name>Mg(2+)</name>
        <dbReference type="ChEBI" id="CHEBI:18420"/>
    </ligand>
</feature>
<reference key="1">
    <citation type="journal article" date="2010" name="Nature">
        <title>Comparative genomics reveals mobile pathogenicity chromosomes in Fusarium.</title>
        <authorList>
            <person name="Ma L.-J."/>
            <person name="van der Does H.C."/>
            <person name="Borkovich K.A."/>
            <person name="Coleman J.J."/>
            <person name="Daboussi M.-J."/>
            <person name="Di Pietro A."/>
            <person name="Dufresne M."/>
            <person name="Freitag M."/>
            <person name="Grabherr M."/>
            <person name="Henrissat B."/>
            <person name="Houterman P.M."/>
            <person name="Kang S."/>
            <person name="Shim W.-B."/>
            <person name="Woloshuk C."/>
            <person name="Xie X."/>
            <person name="Xu J.-R."/>
            <person name="Antoniw J."/>
            <person name="Baker S.E."/>
            <person name="Bluhm B.H."/>
            <person name="Breakspear A."/>
            <person name="Brown D.W."/>
            <person name="Butchko R.A.E."/>
            <person name="Chapman S."/>
            <person name="Coulson R."/>
            <person name="Coutinho P.M."/>
            <person name="Danchin E.G.J."/>
            <person name="Diener A."/>
            <person name="Gale L.R."/>
            <person name="Gardiner D.M."/>
            <person name="Goff S."/>
            <person name="Hammond-Kosack K.E."/>
            <person name="Hilburn K."/>
            <person name="Hua-Van A."/>
            <person name="Jonkers W."/>
            <person name="Kazan K."/>
            <person name="Kodira C.D."/>
            <person name="Koehrsen M."/>
            <person name="Kumar L."/>
            <person name="Lee Y.-H."/>
            <person name="Li L."/>
            <person name="Manners J.M."/>
            <person name="Miranda-Saavedra D."/>
            <person name="Mukherjee M."/>
            <person name="Park G."/>
            <person name="Park J."/>
            <person name="Park S.-Y."/>
            <person name="Proctor R.H."/>
            <person name="Regev A."/>
            <person name="Ruiz-Roldan M.C."/>
            <person name="Sain D."/>
            <person name="Sakthikumar S."/>
            <person name="Sykes S."/>
            <person name="Schwartz D.C."/>
            <person name="Turgeon B.G."/>
            <person name="Wapinski I."/>
            <person name="Yoder O."/>
            <person name="Young S."/>
            <person name="Zeng Q."/>
            <person name="Zhou S."/>
            <person name="Galagan J."/>
            <person name="Cuomo C.A."/>
            <person name="Kistler H.C."/>
            <person name="Rep M."/>
        </authorList>
    </citation>
    <scope>NUCLEOTIDE SEQUENCE [LARGE SCALE GENOMIC DNA]</scope>
    <source>
        <strain>M3125 / FGSC 7600</strain>
    </source>
</reference>
<reference key="2">
    <citation type="journal article" date="2007" name="ChemBioChem">
        <title>Synthesis of [1,2-13C2, 15N]-L-homoserine and its incorporation by the PKS-NRPS system of Fusarium moniliforme into the mycotoxin fusarin C.</title>
        <authorList>
            <person name="Rees D.O."/>
            <person name="Bushby N."/>
            <person name="Cox R.J."/>
            <person name="Harding J.R."/>
            <person name="Simpson T.J."/>
            <person name="Willis C.L."/>
        </authorList>
    </citation>
    <scope>FUNCTION</scope>
</reference>
<reference key="3">
    <citation type="journal article" date="2012" name="Fungal Genet. Biol.">
        <title>Identification of gene clusters associated with fusaric acid, fusarin, and perithecial pigment production in Fusarium verticillioides.</title>
        <authorList>
            <person name="Brown D.W."/>
            <person name="Butchko R.A."/>
            <person name="Busman M."/>
            <person name="Proctor R.H."/>
        </authorList>
    </citation>
    <scope>FUNCTION</scope>
</reference>
<accession>W7N6M8</accession>
<organism>
    <name type="scientific">Gibberella moniliformis (strain M3125 / FGSC 7600)</name>
    <name type="common">Maize ear and stalk rot fungus</name>
    <name type="synonym">Fusarium verticillioides</name>
    <dbReference type="NCBI Taxonomy" id="334819"/>
    <lineage>
        <taxon>Eukaryota</taxon>
        <taxon>Fungi</taxon>
        <taxon>Dikarya</taxon>
        <taxon>Ascomycota</taxon>
        <taxon>Pezizomycotina</taxon>
        <taxon>Sordariomycetes</taxon>
        <taxon>Hypocreomycetidae</taxon>
        <taxon>Hypocreales</taxon>
        <taxon>Nectriaceae</taxon>
        <taxon>Fusarium</taxon>
        <taxon>Fusarium fujikuroi species complex</taxon>
    </lineage>
</organism>
<comment type="function">
    <text evidence="3 4 5">Methyltransferase; part of the gene cluster that mediates the biosynthesis of the mycotoxin fusarin C (PubMed:17121404, PubMed:22652150). Within the cluster, FUS1, FUS2, FUS8 and FUS9 are sufficient for fusarin production (By similarity). The roles of the other FUS members are yet undetermined (By similarity). The fusarin C synthetase FUS1 is responsible for the condensation of one acetyl-coenzyme A (CoA) unit with six malonyl-CoA units and the amide linkage of the arising heptaketide and homoserine, subsequently releasing the first intermediate, prefusarin, as an alcohol with an open ring structure (PubMed:17121404). The cytochrome P450 monooxygenase FUS8 participates in multiple oxidation processes at carbon C-20 and is able to use the FUS1 product as substrate, resulting in formation of 20-hydroxy-prefusarin (By similarity). This reaction seems to be essential before the 2-pyrrolidone ring closure can be catalyzed by FUS2, generating 20-hydroxy-fusarin (By similarity). FUS8 is able to further oxidizes carbon C-20 after ring closure, resulting in the formation of carboxy-fusarin C (By similarity). As the last step, FUS9 methylates the hydroxyl group at C-21 to generate fusarin C (By similarity). Fusarin C can then rearrange to epi-fusarin C, the (z)-isomers, and fusarin A and fusarin D (By similarity).</text>
</comment>
<comment type="cofactor">
    <cofactor evidence="2">
        <name>Mg(2+)</name>
        <dbReference type="ChEBI" id="CHEBI:18420"/>
    </cofactor>
    <text evidence="2">Binds 1 Mg(2+) ion per subunit.</text>
</comment>
<comment type="pathway">
    <text evidence="3 8">Mycotoxin biosynthesis.</text>
</comment>
<comment type="similarity">
    <text evidence="7">Belongs to the methyltransferase superfamily. Type-7 methyltransferase family.</text>
</comment>